<gene>
    <name evidence="5" type="primary">OMT3</name>
    <name evidence="5" type="synonym">Phex2402</name>
</gene>
<name>POMT3_SINHE</name>
<accession>A0A0N9HMN6</accession>
<protein>
    <recommendedName>
        <fullName evidence="5">Pluviatolide O-methyltransferase</fullName>
        <shortName evidence="5">PhOMT3</shortName>
        <ecNumber evidence="3 4">2.1.1.323</ecNumber>
    </recommendedName>
</protein>
<organism>
    <name type="scientific">Sinopodophyllum hexandrum</name>
    <name type="common">Himalayan may apple</name>
    <name type="synonym">Podophyllum hexandrum</name>
    <dbReference type="NCBI Taxonomy" id="93608"/>
    <lineage>
        <taxon>Eukaryota</taxon>
        <taxon>Viridiplantae</taxon>
        <taxon>Streptophyta</taxon>
        <taxon>Embryophyta</taxon>
        <taxon>Tracheophyta</taxon>
        <taxon>Spermatophyta</taxon>
        <taxon>Magnoliopsida</taxon>
        <taxon>Ranunculales</taxon>
        <taxon>Berberidaceae</taxon>
        <taxon>Podophylloideae</taxon>
        <taxon>Podophylleae</taxon>
        <taxon>Sinopodophyllum</taxon>
    </lineage>
</organism>
<reference key="1">
    <citation type="journal article" date="2015" name="Science">
        <title>Six enzymes from mayapple that complete the biosynthetic pathway to the etoposide aglycone.</title>
        <authorList>
            <person name="Lau W."/>
            <person name="Sattely E.S."/>
        </authorList>
    </citation>
    <scope>NUCLEOTIDE SEQUENCE [MRNA]</scope>
    <scope>FUNCTION</scope>
    <scope>CATALYTIC ACTIVITY</scope>
    <scope>BIOTECHNOLOGY</scope>
    <scope>TISSUE SPECIFICITY</scope>
    <scope>BIOPHYSICOCHEMICAL PROPERTIES</scope>
    <scope>INDUCTION BY WOUNDING</scope>
    <scope>PATHWAY</scope>
</reference>
<dbReference type="EC" id="2.1.1.323" evidence="3 4"/>
<dbReference type="EMBL" id="KT390157">
    <property type="protein sequence ID" value="ALG05119.1"/>
    <property type="molecule type" value="mRNA"/>
</dbReference>
<dbReference type="SMR" id="A0A0N9HMN6"/>
<dbReference type="KEGG" id="ag:ALG05119"/>
<dbReference type="BRENDA" id="2.1.1.323">
    <property type="organism ID" value="4928"/>
</dbReference>
<dbReference type="UniPathway" id="UPA00711"/>
<dbReference type="GO" id="GO:0008171">
    <property type="term" value="F:O-methyltransferase activity"/>
    <property type="evidence" value="ECO:0000314"/>
    <property type="project" value="UniProtKB"/>
</dbReference>
<dbReference type="GO" id="GO:0046983">
    <property type="term" value="F:protein dimerization activity"/>
    <property type="evidence" value="ECO:0007669"/>
    <property type="project" value="InterPro"/>
</dbReference>
<dbReference type="GO" id="GO:0008757">
    <property type="term" value="F:S-adenosylmethionine-dependent methyltransferase activity"/>
    <property type="evidence" value="ECO:0000314"/>
    <property type="project" value="UniProtKB"/>
</dbReference>
<dbReference type="GO" id="GO:0032259">
    <property type="term" value="P:methylation"/>
    <property type="evidence" value="ECO:0007669"/>
    <property type="project" value="UniProtKB-KW"/>
</dbReference>
<dbReference type="GO" id="GO:0009699">
    <property type="term" value="P:phenylpropanoid biosynthetic process"/>
    <property type="evidence" value="ECO:0000314"/>
    <property type="project" value="UniProtKB"/>
</dbReference>
<dbReference type="GO" id="GO:0009611">
    <property type="term" value="P:response to wounding"/>
    <property type="evidence" value="ECO:0000270"/>
    <property type="project" value="UniProtKB"/>
</dbReference>
<dbReference type="CDD" id="cd02440">
    <property type="entry name" value="AdoMet_MTases"/>
    <property type="match status" value="1"/>
</dbReference>
<dbReference type="FunFam" id="1.10.10.10:FF:000213">
    <property type="entry name" value="Coniferyl alcohol 9-O-methyltransferase"/>
    <property type="match status" value="1"/>
</dbReference>
<dbReference type="FunFam" id="3.40.50.150:FF:000057">
    <property type="entry name" value="O-methyltransferase ZRP4"/>
    <property type="match status" value="1"/>
</dbReference>
<dbReference type="Gene3D" id="3.40.50.150">
    <property type="entry name" value="Vaccinia Virus protein VP39"/>
    <property type="match status" value="1"/>
</dbReference>
<dbReference type="Gene3D" id="1.10.10.10">
    <property type="entry name" value="Winged helix-like DNA-binding domain superfamily/Winged helix DNA-binding domain"/>
    <property type="match status" value="1"/>
</dbReference>
<dbReference type="InterPro" id="IPR016461">
    <property type="entry name" value="COMT-like"/>
</dbReference>
<dbReference type="InterPro" id="IPR001077">
    <property type="entry name" value="O_MeTrfase_dom"/>
</dbReference>
<dbReference type="InterPro" id="IPR012967">
    <property type="entry name" value="Plant_O-MeTrfase_dimerisation"/>
</dbReference>
<dbReference type="InterPro" id="IPR029063">
    <property type="entry name" value="SAM-dependent_MTases_sf"/>
</dbReference>
<dbReference type="InterPro" id="IPR036388">
    <property type="entry name" value="WH-like_DNA-bd_sf"/>
</dbReference>
<dbReference type="InterPro" id="IPR036390">
    <property type="entry name" value="WH_DNA-bd_sf"/>
</dbReference>
<dbReference type="PANTHER" id="PTHR11746">
    <property type="entry name" value="O-METHYLTRANSFERASE"/>
    <property type="match status" value="1"/>
</dbReference>
<dbReference type="Pfam" id="PF08100">
    <property type="entry name" value="Dimerisation"/>
    <property type="match status" value="1"/>
</dbReference>
<dbReference type="Pfam" id="PF00891">
    <property type="entry name" value="Methyltransf_2"/>
    <property type="match status" value="1"/>
</dbReference>
<dbReference type="PIRSF" id="PIRSF005739">
    <property type="entry name" value="O-mtase"/>
    <property type="match status" value="1"/>
</dbReference>
<dbReference type="SUPFAM" id="SSF53335">
    <property type="entry name" value="S-adenosyl-L-methionine-dependent methyltransferases"/>
    <property type="match status" value="1"/>
</dbReference>
<dbReference type="SUPFAM" id="SSF46785">
    <property type="entry name" value="Winged helix' DNA-binding domain"/>
    <property type="match status" value="1"/>
</dbReference>
<dbReference type="PROSITE" id="PS51683">
    <property type="entry name" value="SAM_OMT_II"/>
    <property type="match status" value="1"/>
</dbReference>
<evidence type="ECO:0000250" key="1">
    <source>
        <dbReference type="UniProtKB" id="F1DBB3"/>
    </source>
</evidence>
<evidence type="ECO:0000250" key="2">
    <source>
        <dbReference type="UniProtKB" id="P28002"/>
    </source>
</evidence>
<evidence type="ECO:0000255" key="3">
    <source>
        <dbReference type="PROSITE-ProRule" id="PRU01020"/>
    </source>
</evidence>
<evidence type="ECO:0000269" key="4">
    <source>
    </source>
</evidence>
<evidence type="ECO:0000303" key="5">
    <source>
    </source>
</evidence>
<evidence type="ECO:0000305" key="6">
    <source>
    </source>
</evidence>
<keyword id="KW-0489">Methyltransferase</keyword>
<keyword id="KW-0949">S-adenosyl-L-methionine</keyword>
<keyword id="KW-0808">Transferase</keyword>
<sequence length="372" mass="41268">MEMAPTMDLEIRNGNGYGDSGEELLAAQAHIYNHIFNFISSMALKCAVELNIPEILHNHQPKAVTLSELVQALQIPQAKSACLYRLLRILVHSGFFAITKIQSEGDEEGYLPTLSSKLLLKNHPMSMSPCLLGLVNPTMVAPMHFFSDWFKRSDDMTPFEATHGASLWKYFGETPHMAEIFNEAMGCETRLAMSVVLKECKGKLEGISSLVDVGGGTGNVGRAIAEAFPNVKCTVLDLPQVVGNLKGSNNLEFVSGDMFQFIPPADVVFLKWILHDWNDEECIKILKRCKEAIPSKEEGGKLIIIDMVVNDHNKGSYESTETQLFYDLTLMALLTGTERTETEWKKLFVAAGFTSYIISPVLGLKSIIEVFP</sequence>
<comment type="function">
    <text evidence="4">O-methyltransferase involved in the biosynthesis of etoposide, a chemotherapeutic compound of the topoisomerase inhibitor family (PubMed:26359402). Catalyzes the methylation of (-)-pluviatolide to produce (-)-bursehernin (PubMed:26359402).</text>
</comment>
<comment type="catalytic activity">
    <reaction evidence="4">
        <text>(-)-pluviatolide + S-adenosyl-L-methionine = (-)-bursehernin + S-adenosyl-L-homocysteine + H(+)</text>
        <dbReference type="Rhea" id="RHEA:49036"/>
        <dbReference type="ChEBI" id="CHEBI:15378"/>
        <dbReference type="ChEBI" id="CHEBI:57856"/>
        <dbReference type="ChEBI" id="CHEBI:59789"/>
        <dbReference type="ChEBI" id="CHEBI:90893"/>
        <dbReference type="ChEBI" id="CHEBI:90896"/>
        <dbReference type="EC" id="2.1.1.323"/>
    </reaction>
    <physiologicalReaction direction="left-to-right" evidence="4">
        <dbReference type="Rhea" id="RHEA:49037"/>
    </physiologicalReaction>
</comment>
<comment type="biophysicochemical properties">
    <kinetics>
        <KM evidence="4">1.4 uM for (-)-pluviatolide</KM>
        <Vmax evidence="4">1.7 nmol/min/mg enzyme with (-)-pluviatolide as substrate</Vmax>
        <text evidence="4">kcat is 0.72 sec(-1) with (-)-pluviatolide as substrate.</text>
    </kinetics>
</comment>
<comment type="pathway">
    <text evidence="4">Aromatic compound metabolism; phenylpropanoid biosynthesis.</text>
</comment>
<comment type="subunit">
    <text evidence="2">Homodimer.</text>
</comment>
<comment type="tissue specificity">
    <text evidence="4">Mostly expressed in stems, and, to a lower extent, in leaves.</text>
</comment>
<comment type="induction">
    <text evidence="4">Transiently induced after wounding.</text>
</comment>
<comment type="biotechnology">
    <text evidence="6">Combinatorially expression of Sinopodophyllum hexandrum (mayapple) genes of the podophyllotoxin pathway (e.g. DIR, PLR, SDH, CYP719A23, OMT3, CYP71CU1, OMT1, 2-ODD, CYP71BE54 and CYP82D61) in Nicotiana benthamiana (tobacco) results in the production of the chemotherapeutic compound etoposide.</text>
</comment>
<comment type="similarity">
    <text evidence="3">Belongs to the class I-like SAM-binding methyltransferase superfamily. Cation-independent O-methyltransferase family. COMT subfamily.</text>
</comment>
<feature type="chain" id="PRO_0000451904" description="Pluviatolide O-methyltransferase">
    <location>
        <begin position="1"/>
        <end position="372"/>
    </location>
</feature>
<feature type="active site" description="Proton acceptor" evidence="3">
    <location>
        <position position="275"/>
    </location>
</feature>
<feature type="active site" evidence="1">
    <location>
        <position position="306"/>
    </location>
</feature>
<feature type="active site" evidence="1">
    <location>
        <position position="338"/>
    </location>
</feature>
<feature type="binding site" evidence="2">
    <location>
        <position position="214"/>
    </location>
    <ligand>
        <name>S-adenosyl-L-homocysteine</name>
        <dbReference type="ChEBI" id="CHEBI:57856"/>
    </ligand>
</feature>
<feature type="binding site" evidence="2">
    <location>
        <position position="237"/>
    </location>
    <ligand>
        <name>S-adenosyl-L-homocysteine</name>
        <dbReference type="ChEBI" id="CHEBI:57856"/>
    </ligand>
</feature>
<feature type="binding site" evidence="2">
    <location>
        <position position="257"/>
    </location>
    <ligand>
        <name>S-adenosyl-L-homocysteine</name>
        <dbReference type="ChEBI" id="CHEBI:57856"/>
    </ligand>
</feature>
<feature type="binding site" evidence="2">
    <location>
        <position position="258"/>
    </location>
    <ligand>
        <name>S-adenosyl-L-homocysteine</name>
        <dbReference type="ChEBI" id="CHEBI:57856"/>
    </ligand>
</feature>
<feature type="binding site" evidence="2">
    <location>
        <position position="271"/>
    </location>
    <ligand>
        <name>S-adenosyl-L-homocysteine</name>
        <dbReference type="ChEBI" id="CHEBI:57856"/>
    </ligand>
</feature>
<proteinExistence type="evidence at protein level"/>